<comment type="function">
    <text evidence="5">Probable transcription factor that may function in the maintenance of the proper function of the central cell in pollen tube attraction.</text>
</comment>
<comment type="subunit">
    <text evidence="3">Interacts with MEE14/CBP1.</text>
</comment>
<comment type="subcellular location">
    <subcellularLocation>
        <location evidence="1">Nucleus</location>
    </subcellularLocation>
</comment>
<proteinExistence type="evidence at protein level"/>
<evidence type="ECO:0000255" key="1">
    <source>
        <dbReference type="PROSITE-ProRule" id="PRU00251"/>
    </source>
</evidence>
<evidence type="ECO:0000256" key="2">
    <source>
        <dbReference type="SAM" id="MobiDB-lite"/>
    </source>
</evidence>
<evidence type="ECO:0000269" key="3">
    <source>
    </source>
</evidence>
<evidence type="ECO:0000305" key="4"/>
<evidence type="ECO:0000305" key="5">
    <source>
    </source>
</evidence>
<evidence type="ECO:0000312" key="6">
    <source>
        <dbReference type="Araport" id="AT5G39750"/>
    </source>
</evidence>
<evidence type="ECO:0000312" key="7">
    <source>
        <dbReference type="EMBL" id="AAN52789.1"/>
    </source>
</evidence>
<accession>Q9FIX0</accession>
<organism>
    <name type="scientific">Arabidopsis thaliana</name>
    <name type="common">Mouse-ear cress</name>
    <dbReference type="NCBI Taxonomy" id="3702"/>
    <lineage>
        <taxon>Eukaryota</taxon>
        <taxon>Viridiplantae</taxon>
        <taxon>Streptophyta</taxon>
        <taxon>Embryophyta</taxon>
        <taxon>Tracheophyta</taxon>
        <taxon>Spermatophyta</taxon>
        <taxon>Magnoliopsida</taxon>
        <taxon>eudicotyledons</taxon>
        <taxon>Gunneridae</taxon>
        <taxon>Pentapetalae</taxon>
        <taxon>rosids</taxon>
        <taxon>malvids</taxon>
        <taxon>Brassicales</taxon>
        <taxon>Brassicaceae</taxon>
        <taxon>Camelineae</taxon>
        <taxon>Arabidopsis</taxon>
    </lineage>
</organism>
<keyword id="KW-0238">DNA-binding</keyword>
<keyword id="KW-0539">Nucleus</keyword>
<keyword id="KW-1185">Reference proteome</keyword>
<keyword id="KW-0804">Transcription</keyword>
<keyword id="KW-0805">Transcription regulation</keyword>
<reference key="1">
    <citation type="journal article" date="2003" name="Plant Cell">
        <title>Molecular and phylogenetic analyses of the complete MADS-box transcription factor family in Arabidopsis: new openings to the MADS world.</title>
        <authorList>
            <person name="Parenicova L."/>
            <person name="de Folter S."/>
            <person name="Kieffer M."/>
            <person name="Horner D.S."/>
            <person name="Favalli C."/>
            <person name="Busscher J."/>
            <person name="Cook H.E."/>
            <person name="Ingram R.M."/>
            <person name="Kater M.M."/>
            <person name="Davies B."/>
            <person name="Angenent G.C."/>
            <person name="Colombo L."/>
        </authorList>
    </citation>
    <scope>NUCLEOTIDE SEQUENCE [MRNA]</scope>
    <source>
        <strain>cv. Columbia</strain>
        <tissue evidence="7">Flower</tissue>
    </source>
</reference>
<reference key="2">
    <citation type="journal article" date="1998" name="DNA Res.">
        <title>Structural analysis of Arabidopsis thaliana chromosome 5. VII. Sequence features of the regions of 1,013,767 bp covered by sixteen physically assigned P1 and TAC clones.</title>
        <authorList>
            <person name="Nakamura Y."/>
            <person name="Sato S."/>
            <person name="Asamizu E."/>
            <person name="Kaneko T."/>
            <person name="Kotani H."/>
            <person name="Miyajima N."/>
            <person name="Tabata S."/>
        </authorList>
    </citation>
    <scope>NUCLEOTIDE SEQUENCE [LARGE SCALE GENOMIC DNA]</scope>
    <source>
        <strain>cv. Columbia</strain>
    </source>
</reference>
<reference key="3">
    <citation type="journal article" date="2017" name="Plant J.">
        <title>Araport11: a complete reannotation of the Arabidopsis thaliana reference genome.</title>
        <authorList>
            <person name="Cheng C.Y."/>
            <person name="Krishnakumar V."/>
            <person name="Chan A.P."/>
            <person name="Thibaud-Nissen F."/>
            <person name="Schobel S."/>
            <person name="Town C.D."/>
        </authorList>
    </citation>
    <scope>GENOME REANNOTATION</scope>
    <source>
        <strain>cv. Columbia</strain>
    </source>
</reference>
<reference key="4">
    <citation type="journal article" date="2015" name="Plant Cell">
        <title>Arabidopsis CBP1 is a novel regulator of transcription initiation in central cell-mediated pollen tube guidance.</title>
        <authorList>
            <person name="Li H.J."/>
            <person name="Zhu S.S."/>
            <person name="Zhang M.X."/>
            <person name="Wang T."/>
            <person name="Liang L."/>
            <person name="Xue Y."/>
            <person name="Shi D.Q."/>
            <person name="Liu J."/>
            <person name="Yang W.C."/>
        </authorList>
    </citation>
    <scope>FUNCTION</scope>
    <scope>INTERACTION WITH ME14/CBP1</scope>
</reference>
<gene>
    <name evidence="4" type="primary">AGL81</name>
    <name evidence="6" type="ordered locus">At5g39750</name>
</gene>
<protein>
    <recommendedName>
        <fullName evidence="4">Agamous-like MADS-box protein AGL81</fullName>
    </recommendedName>
</protein>
<sequence length="355" mass="40178">MAIRSLPSSSRCSSSSSSSSYSLASTSLSNRLETIFKKASELCTLCDIEACVIYYGPDGELKTWPPEREKVEDIALRYSQLNEALRRKKSVTLYDFLNKKKDKTNLEKKAKITDNDDLKTCLKNVNILKYPLADHYSPDQVSQLIQSLEPHVSKVRERIRFVESQKHKETKPDHQSLASSSLNHQTQSLNPSQFSLFMYNHGDNTLSQIPVSASNFNQDYFSALLEQSELKSQIMKQDLCGYEQNMCMSNHGDATLSQIPLSASNLNQDFSALLQDESGLMQQELCGYDQNMFMNNNNFQHSFVSNTQDHSAPVVQESVNNNYGLMPHVPCGYDQNLFTSDITNNNLLINNSMFL</sequence>
<name>AGL81_ARATH</name>
<feature type="chain" id="PRO_0000435415" description="Agamous-like MADS-box protein AGL81">
    <location>
        <begin position="1"/>
        <end position="355"/>
    </location>
</feature>
<feature type="domain" description="MADS-box" evidence="1">
    <location>
        <begin position="26"/>
        <end position="68"/>
    </location>
</feature>
<feature type="region of interest" description="Disordered" evidence="2">
    <location>
        <begin position="1"/>
        <end position="22"/>
    </location>
</feature>
<feature type="region of interest" description="Disordered" evidence="2">
    <location>
        <begin position="162"/>
        <end position="186"/>
    </location>
</feature>
<feature type="compositionally biased region" description="Basic and acidic residues" evidence="2">
    <location>
        <begin position="162"/>
        <end position="174"/>
    </location>
</feature>
<feature type="compositionally biased region" description="Polar residues" evidence="2">
    <location>
        <begin position="176"/>
        <end position="186"/>
    </location>
</feature>
<dbReference type="EMBL" id="AY141225">
    <property type="protein sequence ID" value="AAN52789.1"/>
    <property type="molecule type" value="mRNA"/>
</dbReference>
<dbReference type="EMBL" id="AB016876">
    <property type="protein sequence ID" value="BAB11381.1"/>
    <property type="molecule type" value="Genomic_DNA"/>
</dbReference>
<dbReference type="EMBL" id="CP002688">
    <property type="protein sequence ID" value="AED94471.1"/>
    <property type="molecule type" value="Genomic_DNA"/>
</dbReference>
<dbReference type="RefSeq" id="NP_198791.1">
    <property type="nucleotide sequence ID" value="NM_123337.1"/>
</dbReference>
<dbReference type="SMR" id="Q9FIX0"/>
<dbReference type="FunCoup" id="Q9FIX0">
    <property type="interactions" value="61"/>
</dbReference>
<dbReference type="IntAct" id="Q9FIX0">
    <property type="interactions" value="11"/>
</dbReference>
<dbReference type="STRING" id="3702.Q9FIX0"/>
<dbReference type="PaxDb" id="3702-AT5G39750.1"/>
<dbReference type="EnsemblPlants" id="AT5G39750.1">
    <property type="protein sequence ID" value="AT5G39750.1"/>
    <property type="gene ID" value="AT5G39750"/>
</dbReference>
<dbReference type="GeneID" id="833971"/>
<dbReference type="Gramene" id="AT5G39750.1">
    <property type="protein sequence ID" value="AT5G39750.1"/>
    <property type="gene ID" value="AT5G39750"/>
</dbReference>
<dbReference type="KEGG" id="ath:AT5G39750"/>
<dbReference type="Araport" id="AT5G39750"/>
<dbReference type="TAIR" id="AT5G39750">
    <property type="gene designation" value="AGL81"/>
</dbReference>
<dbReference type="eggNOG" id="KOG0014">
    <property type="taxonomic scope" value="Eukaryota"/>
</dbReference>
<dbReference type="HOGENOM" id="CLU_053043_0_0_1"/>
<dbReference type="InParanoid" id="Q9FIX0"/>
<dbReference type="OMA" id="GYDQNMF"/>
<dbReference type="PhylomeDB" id="Q9FIX0"/>
<dbReference type="PRO" id="PR:Q9FIX0"/>
<dbReference type="Proteomes" id="UP000006548">
    <property type="component" value="Chromosome 5"/>
</dbReference>
<dbReference type="ExpressionAtlas" id="Q9FIX0">
    <property type="expression patterns" value="baseline and differential"/>
</dbReference>
<dbReference type="GO" id="GO:0005634">
    <property type="term" value="C:nucleus"/>
    <property type="evidence" value="ECO:0007669"/>
    <property type="project" value="UniProtKB-SubCell"/>
</dbReference>
<dbReference type="GO" id="GO:0000987">
    <property type="term" value="F:cis-regulatory region sequence-specific DNA binding"/>
    <property type="evidence" value="ECO:0007669"/>
    <property type="project" value="InterPro"/>
</dbReference>
<dbReference type="GO" id="GO:0003700">
    <property type="term" value="F:DNA-binding transcription factor activity"/>
    <property type="evidence" value="ECO:0000250"/>
    <property type="project" value="TAIR"/>
</dbReference>
<dbReference type="GO" id="GO:0000981">
    <property type="term" value="F:DNA-binding transcription factor activity, RNA polymerase II-specific"/>
    <property type="evidence" value="ECO:0007669"/>
    <property type="project" value="InterPro"/>
</dbReference>
<dbReference type="GO" id="GO:0046983">
    <property type="term" value="F:protein dimerization activity"/>
    <property type="evidence" value="ECO:0007669"/>
    <property type="project" value="InterPro"/>
</dbReference>
<dbReference type="GO" id="GO:0045944">
    <property type="term" value="P:positive regulation of transcription by RNA polymerase II"/>
    <property type="evidence" value="ECO:0007669"/>
    <property type="project" value="InterPro"/>
</dbReference>
<dbReference type="CDD" id="cd00266">
    <property type="entry name" value="MADS_SRF_like"/>
    <property type="match status" value="1"/>
</dbReference>
<dbReference type="FunFam" id="3.40.1810.10:FF:000025">
    <property type="entry name" value="AGAMOUS-like 76"/>
    <property type="match status" value="1"/>
</dbReference>
<dbReference type="Gene3D" id="3.40.1810.10">
    <property type="entry name" value="Transcription factor, MADS-box"/>
    <property type="match status" value="1"/>
</dbReference>
<dbReference type="InterPro" id="IPR033897">
    <property type="entry name" value="SRF-like_MADS-box"/>
</dbReference>
<dbReference type="InterPro" id="IPR002100">
    <property type="entry name" value="TF_MADSbox"/>
</dbReference>
<dbReference type="InterPro" id="IPR036879">
    <property type="entry name" value="TF_MADSbox_sf"/>
</dbReference>
<dbReference type="Pfam" id="PF00319">
    <property type="entry name" value="SRF-TF"/>
    <property type="match status" value="1"/>
</dbReference>
<dbReference type="SMART" id="SM00432">
    <property type="entry name" value="MADS"/>
    <property type="match status" value="1"/>
</dbReference>
<dbReference type="SUPFAM" id="SSF55455">
    <property type="entry name" value="SRF-like"/>
    <property type="match status" value="1"/>
</dbReference>
<dbReference type="PROSITE" id="PS50066">
    <property type="entry name" value="MADS_BOX_2"/>
    <property type="match status" value="1"/>
</dbReference>